<name>PWP2A_XENTR</name>
<accession>F7AQ22</accession>
<accession>B1H3K5</accession>
<keyword id="KW-0539">Nucleus</keyword>
<keyword id="KW-1185">Reference proteome</keyword>
<keyword id="KW-0804">Transcription</keyword>
<keyword id="KW-0805">Transcription regulation</keyword>
<sequence length="784" mass="87069">MAAVAGAPGPGEGGESEQDSETIPGERRLGRLSCEPMEAELDSERRSLVRCEPCCGMEIDTQENAGPDIEQLGDSGAEQVYGIHTNSEFVSVSAVDYMGINQGQIAPENRKARSEQLPREPFLQRQPIPMILSEVTDSGIYTGLCLEEAKFSSNNGSEASLNYSECDNRSVGTTEGSVVTSGIDSLIPGSEVQVTLDHIIQDALVVSFCHGNRIFSGVLMDLSKRFGPHGIPVTVHPRREYKNKPVESIQEESKSFHEEPLVKSEENSPEDVTPIQQLENCKVQNLWTTKPPPLFHEGAPYPPPLFIRDTYNQSIPQPPPRKIKRPKKKIYREEPTSIMNAIKLRPRQVLCDKCKNNVVADKKEIRKVATDSYKTEEGKRRRHETVTTVNKKLKTDHKVNGKSQNESQKRTPITKVTNLAHGRGKVVKVPSQTSAAKTQMHTKEVLQNKNMDHVKAREVLKMAKEKAQKKQKVTTSSKNAHSKVHFTRRLQNSSSGTLPPRLRIKPQRYRNEENDSSLKPGLETLRSSKIGIKPQTRYSATRSAGETPSEIQSPSNGPEEISSEMQDTNVCVPPEEQDLQQTLGKRGSKSNITVYMTINQKKANSSSASVCSSDSTDDMKSSHSECSSTENFDFPPGSMHAPSSSSSSSASSKEEKKLSNSLKIKMFSKNVSKCVTPDGRTICVGDIVWAKIYGFPWWPARILAITVSRKDTGLLVRQEARISWFGSPTTSFLALSQLTPFLENFQSRFNKKRKGLYRKAITEAAKAAKQLTPEVRALLTQFET</sequence>
<evidence type="ECO:0000250" key="1">
    <source>
        <dbReference type="UniProtKB" id="Q96N64"/>
    </source>
</evidence>
<evidence type="ECO:0000255" key="2">
    <source>
        <dbReference type="PROSITE-ProRule" id="PRU00162"/>
    </source>
</evidence>
<evidence type="ECO:0000256" key="3">
    <source>
        <dbReference type="SAM" id="MobiDB-lite"/>
    </source>
</evidence>
<evidence type="ECO:0000269" key="4">
    <source>
    </source>
</evidence>
<evidence type="ECO:0000305" key="5"/>
<feature type="chain" id="PRO_0000441730" description="PWWP domain-containing protein 2A">
    <location>
        <begin position="1"/>
        <end position="784"/>
    </location>
</feature>
<feature type="domain" description="PWWP" evidence="2">
    <location>
        <begin position="684"/>
        <end position="744"/>
    </location>
</feature>
<feature type="region of interest" description="Disordered" evidence="3">
    <location>
        <begin position="1"/>
        <end position="32"/>
    </location>
</feature>
<feature type="region of interest" description="Disordered" evidence="3">
    <location>
        <begin position="244"/>
        <end position="272"/>
    </location>
</feature>
<feature type="region of interest" description="Disordered" evidence="3">
    <location>
        <begin position="463"/>
        <end position="567"/>
    </location>
</feature>
<feature type="region of interest" description="Disordered" evidence="3">
    <location>
        <begin position="605"/>
        <end position="654"/>
    </location>
</feature>
<feature type="compositionally biased region" description="Basic and acidic residues" evidence="3">
    <location>
        <begin position="244"/>
        <end position="266"/>
    </location>
</feature>
<feature type="compositionally biased region" description="Polar residues" evidence="3">
    <location>
        <begin position="536"/>
        <end position="556"/>
    </location>
</feature>
<feature type="compositionally biased region" description="Low complexity" evidence="3">
    <location>
        <begin position="605"/>
        <end position="614"/>
    </location>
</feature>
<feature type="sequence conflict" description="In Ref. 2; AAI61427." evidence="5" ref="2">
    <original>E</original>
    <variation>K</variation>
    <location>
        <position position="444"/>
    </location>
</feature>
<organism>
    <name type="scientific">Xenopus tropicalis</name>
    <name type="common">Western clawed frog</name>
    <name type="synonym">Silurana tropicalis</name>
    <dbReference type="NCBI Taxonomy" id="8364"/>
    <lineage>
        <taxon>Eukaryota</taxon>
        <taxon>Metazoa</taxon>
        <taxon>Chordata</taxon>
        <taxon>Craniata</taxon>
        <taxon>Vertebrata</taxon>
        <taxon>Euteleostomi</taxon>
        <taxon>Amphibia</taxon>
        <taxon>Batrachia</taxon>
        <taxon>Anura</taxon>
        <taxon>Pipoidea</taxon>
        <taxon>Pipidae</taxon>
        <taxon>Xenopodinae</taxon>
        <taxon>Xenopus</taxon>
        <taxon>Silurana</taxon>
    </lineage>
</organism>
<gene>
    <name type="primary">pwwp2a</name>
</gene>
<proteinExistence type="evidence at transcript level"/>
<reference key="1">
    <citation type="journal article" date="2010" name="Science">
        <title>The genome of the Western clawed frog Xenopus tropicalis.</title>
        <authorList>
            <person name="Hellsten U."/>
            <person name="Harland R.M."/>
            <person name="Gilchrist M.J."/>
            <person name="Hendrix D."/>
            <person name="Jurka J."/>
            <person name="Kapitonov V."/>
            <person name="Ovcharenko I."/>
            <person name="Putnam N.H."/>
            <person name="Shu S."/>
            <person name="Taher L."/>
            <person name="Blitz I.L."/>
            <person name="Blumberg B."/>
            <person name="Dichmann D.S."/>
            <person name="Dubchak I."/>
            <person name="Amaya E."/>
            <person name="Detter J.C."/>
            <person name="Fletcher R."/>
            <person name="Gerhard D.S."/>
            <person name="Goodstein D."/>
            <person name="Graves T."/>
            <person name="Grigoriev I.V."/>
            <person name="Grimwood J."/>
            <person name="Kawashima T."/>
            <person name="Lindquist E."/>
            <person name="Lucas S.M."/>
            <person name="Mead P.E."/>
            <person name="Mitros T."/>
            <person name="Ogino H."/>
            <person name="Ohta Y."/>
            <person name="Poliakov A.V."/>
            <person name="Pollet N."/>
            <person name="Robert J."/>
            <person name="Salamov A."/>
            <person name="Sater A.K."/>
            <person name="Schmutz J."/>
            <person name="Terry A."/>
            <person name="Vize P.D."/>
            <person name="Warren W.C."/>
            <person name="Wells D."/>
            <person name="Wills A."/>
            <person name="Wilson R.K."/>
            <person name="Zimmerman L.B."/>
            <person name="Zorn A.M."/>
            <person name="Grainger R."/>
            <person name="Grammer T."/>
            <person name="Khokha M.K."/>
            <person name="Richardson P.M."/>
            <person name="Rokhsar D.S."/>
        </authorList>
    </citation>
    <scope>NUCLEOTIDE SEQUENCE [LARGE SCALE GENOMIC DNA]</scope>
</reference>
<reference key="2">
    <citation type="submission" date="2008-03" db="EMBL/GenBank/DDBJ databases">
        <authorList>
            <consortium name="NIH - Xenopus Gene Collection (XGC) project"/>
        </authorList>
    </citation>
    <scope>NUCLEOTIDE SEQUENCE [LARGE SCALE MRNA] OF 115-784</scope>
    <source>
        <tissue>Testis</tissue>
    </source>
</reference>
<reference key="3">
    <citation type="journal article" date="2017" name="EMBO J.">
        <title>Multivalent binding of PWWP2A to H2A.Z regulates mitosis and neural crest differentiation.</title>
        <authorList>
            <person name="Puenzeler S."/>
            <person name="Link S."/>
            <person name="Wagner G."/>
            <person name="Keilhauer E.C."/>
            <person name="Kronbeck N."/>
            <person name="Spitzer R.M."/>
            <person name="Leidescher S."/>
            <person name="Markaki Y."/>
            <person name="Mentele E."/>
            <person name="Regnard C."/>
            <person name="Schneider K."/>
            <person name="Takahashi D."/>
            <person name="Kusakabe M."/>
            <person name="Vardabasso C."/>
            <person name="Zink L.M."/>
            <person name="Straub T."/>
            <person name="Bernstein E."/>
            <person name="Harata M."/>
            <person name="Leonhardt H."/>
            <person name="Mann M."/>
            <person name="Rupp R.A."/>
            <person name="Hake S.B."/>
        </authorList>
    </citation>
    <scope>FUNCTION</scope>
    <scope>DEVELOPMENTAL STAGE</scope>
    <scope>DISRUPTION PHENOTYPE</scope>
</reference>
<protein>
    <recommendedName>
        <fullName>PWWP domain-containing protein 2A</fullName>
    </recommendedName>
</protein>
<comment type="function">
    <text evidence="1 4">H2A.Z-specific chromatin binding protein which plays an important role in the neural crest cell differentiation and/or migration during early development and is essential for the development of the head and eye (PubMed:28645917). Acts as an adapter between distinct nucleosome components (H3K36me3 or H2A.Z) and chromatin-modifying complexes, contributing to the regulation of the levels of histone acetylation at actively transcribed genes (By similarity).</text>
</comment>
<comment type="subcellular location">
    <subcellularLocation>
        <location evidence="1">Nucleus</location>
    </subcellularLocation>
</comment>
<comment type="developmental stage">
    <text evidence="4">Expressed early during development in the neuroectoderm and neural crest.</text>
</comment>
<comment type="disruption phenotype">
    <text evidence="4">Embryos exhibit lack of retinal tissue combined with a reduced head size. Defects in neural crest stem cell migration and differentiation seen.</text>
</comment>
<dbReference type="EMBL" id="AAMC01100632">
    <property type="status" value="NOT_ANNOTATED_CDS"/>
    <property type="molecule type" value="Genomic_DNA"/>
</dbReference>
<dbReference type="EMBL" id="AAMC01100633">
    <property type="status" value="NOT_ANNOTATED_CDS"/>
    <property type="molecule type" value="Genomic_DNA"/>
</dbReference>
<dbReference type="EMBL" id="AAMC01100634">
    <property type="status" value="NOT_ANNOTATED_CDS"/>
    <property type="molecule type" value="Genomic_DNA"/>
</dbReference>
<dbReference type="EMBL" id="BC161427">
    <property type="protein sequence ID" value="AAI61427.1"/>
    <property type="molecule type" value="mRNA"/>
</dbReference>
<dbReference type="SMR" id="F7AQ22"/>
<dbReference type="FunCoup" id="F7AQ22">
    <property type="interactions" value="3246"/>
</dbReference>
<dbReference type="STRING" id="8364.ENSXETP00000026357"/>
<dbReference type="PaxDb" id="8364-ENSXETP00000012601"/>
<dbReference type="eggNOG" id="ENOG502QU6V">
    <property type="taxonomic scope" value="Eukaryota"/>
</dbReference>
<dbReference type="HOGENOM" id="CLU_020678_0_0_1"/>
<dbReference type="InParanoid" id="F7AQ22"/>
<dbReference type="TreeFam" id="TF331271"/>
<dbReference type="Proteomes" id="UP000008143">
    <property type="component" value="Unplaced"/>
</dbReference>
<dbReference type="GO" id="GO:0005634">
    <property type="term" value="C:nucleus"/>
    <property type="evidence" value="ECO:0000250"/>
    <property type="project" value="UniProtKB"/>
</dbReference>
<dbReference type="GO" id="GO:0003682">
    <property type="term" value="F:chromatin binding"/>
    <property type="evidence" value="ECO:0000250"/>
    <property type="project" value="UniProtKB"/>
</dbReference>
<dbReference type="GO" id="GO:0140003">
    <property type="term" value="F:histone H3K36me3 reader activity"/>
    <property type="evidence" value="ECO:0000250"/>
    <property type="project" value="UniProtKB"/>
</dbReference>
<dbReference type="GO" id="GO:0006338">
    <property type="term" value="P:chromatin remodeling"/>
    <property type="evidence" value="ECO:0000250"/>
    <property type="project" value="UniProtKB"/>
</dbReference>
<dbReference type="GO" id="GO:0001654">
    <property type="term" value="P:eye development"/>
    <property type="evidence" value="ECO:0000315"/>
    <property type="project" value="UniProtKB"/>
</dbReference>
<dbReference type="GO" id="GO:0060322">
    <property type="term" value="P:head development"/>
    <property type="evidence" value="ECO:0000315"/>
    <property type="project" value="UniProtKB"/>
</dbReference>
<dbReference type="GO" id="GO:0014033">
    <property type="term" value="P:neural crest cell differentiation"/>
    <property type="evidence" value="ECO:0000315"/>
    <property type="project" value="UniProtKB"/>
</dbReference>
<dbReference type="GO" id="GO:0001755">
    <property type="term" value="P:neural crest cell migration"/>
    <property type="evidence" value="ECO:0000315"/>
    <property type="project" value="UniProtKB"/>
</dbReference>
<dbReference type="CDD" id="cd20152">
    <property type="entry name" value="PWWP_PWWP2A"/>
    <property type="match status" value="1"/>
</dbReference>
<dbReference type="FunFam" id="2.30.30.140:FF:000036">
    <property type="entry name" value="PWWP domain-containing protein 2A"/>
    <property type="match status" value="1"/>
</dbReference>
<dbReference type="Gene3D" id="2.30.30.140">
    <property type="match status" value="1"/>
</dbReference>
<dbReference type="InterPro" id="IPR000313">
    <property type="entry name" value="PWWP_dom"/>
</dbReference>
<dbReference type="PANTHER" id="PTHR16112">
    <property type="entry name" value="METHYL-CPG BINDING PROTEIN, DROSOPHILA"/>
    <property type="match status" value="1"/>
</dbReference>
<dbReference type="PANTHER" id="PTHR16112:SF22">
    <property type="entry name" value="PWWP DOMAIN-CONTAINING 2B"/>
    <property type="match status" value="1"/>
</dbReference>
<dbReference type="Pfam" id="PF00855">
    <property type="entry name" value="PWWP"/>
    <property type="match status" value="1"/>
</dbReference>
<dbReference type="SMART" id="SM00293">
    <property type="entry name" value="PWWP"/>
    <property type="match status" value="1"/>
</dbReference>
<dbReference type="SUPFAM" id="SSF63748">
    <property type="entry name" value="Tudor/PWWP/MBT"/>
    <property type="match status" value="1"/>
</dbReference>
<dbReference type="PROSITE" id="PS50812">
    <property type="entry name" value="PWWP"/>
    <property type="match status" value="1"/>
</dbReference>